<protein>
    <recommendedName>
        <fullName evidence="1">2-keto-3-deoxygluconate permease</fullName>
        <shortName evidence="1">KDG permease</shortName>
    </recommendedName>
</protein>
<evidence type="ECO:0000255" key="1">
    <source>
        <dbReference type="HAMAP-Rule" id="MF_00070"/>
    </source>
</evidence>
<evidence type="ECO:0000305" key="2"/>
<gene>
    <name evidence="1" type="primary">kdgT</name>
    <name type="ordered locus">Z5454</name>
    <name type="ordered locus">ECs4835</name>
</gene>
<proteinExistence type="inferred from homology"/>
<name>KDGT_ECO57</name>
<feature type="chain" id="PRO_0000209676" description="2-keto-3-deoxygluconate permease">
    <location>
        <begin position="1"/>
        <end position="327"/>
    </location>
</feature>
<feature type="transmembrane region" description="Helical" evidence="1">
    <location>
        <begin position="10"/>
        <end position="30"/>
    </location>
</feature>
<feature type="transmembrane region" description="Helical" evidence="1">
    <location>
        <begin position="42"/>
        <end position="62"/>
    </location>
</feature>
<feature type="transmembrane region" description="Helical" evidence="1">
    <location>
        <begin position="73"/>
        <end position="93"/>
    </location>
</feature>
<feature type="transmembrane region" description="Helical" evidence="1">
    <location>
        <begin position="95"/>
        <end position="115"/>
    </location>
</feature>
<feature type="transmembrane region" description="Helical" evidence="1">
    <location>
        <begin position="139"/>
        <end position="159"/>
    </location>
</feature>
<feature type="transmembrane region" description="Helical" evidence="1">
    <location>
        <begin position="163"/>
        <end position="183"/>
    </location>
</feature>
<feature type="transmembrane region" description="Helical" evidence="1">
    <location>
        <begin position="199"/>
        <end position="219"/>
    </location>
</feature>
<feature type="transmembrane region" description="Helical" evidence="1">
    <location>
        <begin position="224"/>
        <end position="244"/>
    </location>
</feature>
<feature type="transmembrane region" description="Helical" evidence="1">
    <location>
        <begin position="254"/>
        <end position="274"/>
    </location>
</feature>
<feature type="transmembrane region" description="Helical" evidence="1">
    <location>
        <begin position="289"/>
        <end position="309"/>
    </location>
</feature>
<sequence length="327" mass="33695">MQIKRLIEKIPGGMMLVPLFLGALCHTFSPGAGKYFGSFTNGMITGTVPILAVWFFCMGASIKLSATGTVLRKSGTLVVTKIAVAWVVAAIASRIIPEHGVEVGFFAGLSTLALVAAMDMTNGGLYASIMQQYGTKEEAGAFVLMSLESGPLMTMIILGTAGIASFEPHVFVGAVLPFLVGFALGNLDPELREFFSKAVQTLIPFFAFALGNTIDLTVIAQTGLLGILLGVAVIIVTGIPLIIADKLIGGGDGTAGIAASSSAGAAVATPVLIAEMVPAFKPMAPAATSLVATAVIVTSILVPILTSIWSRKVKARAAKIEILGTVK</sequence>
<keyword id="KW-0997">Cell inner membrane</keyword>
<keyword id="KW-1003">Cell membrane</keyword>
<keyword id="KW-0472">Membrane</keyword>
<keyword id="KW-1185">Reference proteome</keyword>
<keyword id="KW-0762">Sugar transport</keyword>
<keyword id="KW-0769">Symport</keyword>
<keyword id="KW-0812">Transmembrane</keyword>
<keyword id="KW-1133">Transmembrane helix</keyword>
<keyword id="KW-0813">Transport</keyword>
<organism>
    <name type="scientific">Escherichia coli O157:H7</name>
    <dbReference type="NCBI Taxonomy" id="83334"/>
    <lineage>
        <taxon>Bacteria</taxon>
        <taxon>Pseudomonadati</taxon>
        <taxon>Pseudomonadota</taxon>
        <taxon>Gammaproteobacteria</taxon>
        <taxon>Enterobacterales</taxon>
        <taxon>Enterobacteriaceae</taxon>
        <taxon>Escherichia</taxon>
    </lineage>
</organism>
<accession>Q8X4Q7</accession>
<comment type="function">
    <text evidence="1">Catalyzes the proton-dependent uptake of 2-keto-3-deoxygluconate (KDG) into the cell.</text>
</comment>
<comment type="catalytic activity">
    <reaction evidence="1">
        <text>2-dehydro-3-deoxy-D-gluconate(in) + H(+)(in) = 2-dehydro-3-deoxy-D-gluconate(out) + H(+)(out)</text>
        <dbReference type="Rhea" id="RHEA:29943"/>
        <dbReference type="ChEBI" id="CHEBI:15378"/>
        <dbReference type="ChEBI" id="CHEBI:57990"/>
    </reaction>
    <physiologicalReaction direction="right-to-left" evidence="1">
        <dbReference type="Rhea" id="RHEA:29945"/>
    </physiologicalReaction>
</comment>
<comment type="subcellular location">
    <subcellularLocation>
        <location evidence="1">Cell inner membrane</location>
        <topology evidence="1">Multi-pass membrane protein</topology>
    </subcellularLocation>
</comment>
<comment type="similarity">
    <text evidence="1 2">Belongs to the KdgT transporter family.</text>
</comment>
<comment type="sequence caution" evidence="2">
    <conflict type="erroneous initiation">
        <sequence resource="EMBL-CDS" id="AAG59103"/>
    </conflict>
</comment>
<comment type="sequence caution" evidence="2">
    <conflict type="erroneous initiation">
        <sequence resource="EMBL-CDS" id="BAB38258"/>
    </conflict>
</comment>
<reference key="1">
    <citation type="journal article" date="2001" name="Nature">
        <title>Genome sequence of enterohaemorrhagic Escherichia coli O157:H7.</title>
        <authorList>
            <person name="Perna N.T."/>
            <person name="Plunkett G. III"/>
            <person name="Burland V."/>
            <person name="Mau B."/>
            <person name="Glasner J.D."/>
            <person name="Rose D.J."/>
            <person name="Mayhew G.F."/>
            <person name="Evans P.S."/>
            <person name="Gregor J."/>
            <person name="Kirkpatrick H.A."/>
            <person name="Posfai G."/>
            <person name="Hackett J."/>
            <person name="Klink S."/>
            <person name="Boutin A."/>
            <person name="Shao Y."/>
            <person name="Miller L."/>
            <person name="Grotbeck E.J."/>
            <person name="Davis N.W."/>
            <person name="Lim A."/>
            <person name="Dimalanta E.T."/>
            <person name="Potamousis K."/>
            <person name="Apodaca J."/>
            <person name="Anantharaman T.S."/>
            <person name="Lin J."/>
            <person name="Yen G."/>
            <person name="Schwartz D.C."/>
            <person name="Welch R.A."/>
            <person name="Blattner F.R."/>
        </authorList>
    </citation>
    <scope>NUCLEOTIDE SEQUENCE [LARGE SCALE GENOMIC DNA]</scope>
    <source>
        <strain>O157:H7 / EDL933 / ATCC 700927 / EHEC</strain>
    </source>
</reference>
<reference key="2">
    <citation type="journal article" date="2001" name="DNA Res.">
        <title>Complete genome sequence of enterohemorrhagic Escherichia coli O157:H7 and genomic comparison with a laboratory strain K-12.</title>
        <authorList>
            <person name="Hayashi T."/>
            <person name="Makino K."/>
            <person name="Ohnishi M."/>
            <person name="Kurokawa K."/>
            <person name="Ishii K."/>
            <person name="Yokoyama K."/>
            <person name="Han C.-G."/>
            <person name="Ohtsubo E."/>
            <person name="Nakayama K."/>
            <person name="Murata T."/>
            <person name="Tanaka M."/>
            <person name="Tobe T."/>
            <person name="Iida T."/>
            <person name="Takami H."/>
            <person name="Honda T."/>
            <person name="Sasakawa C."/>
            <person name="Ogasawara N."/>
            <person name="Yasunaga T."/>
            <person name="Kuhara S."/>
            <person name="Shiba T."/>
            <person name="Hattori M."/>
            <person name="Shinagawa H."/>
        </authorList>
    </citation>
    <scope>NUCLEOTIDE SEQUENCE [LARGE SCALE GENOMIC DNA]</scope>
    <source>
        <strain>O157:H7 / Sakai / RIMD 0509952 / EHEC</strain>
    </source>
</reference>
<dbReference type="EMBL" id="AE005174">
    <property type="protein sequence ID" value="AAG59103.1"/>
    <property type="status" value="ALT_INIT"/>
    <property type="molecule type" value="Genomic_DNA"/>
</dbReference>
<dbReference type="EMBL" id="BA000007">
    <property type="protein sequence ID" value="BAB38258.1"/>
    <property type="status" value="ALT_INIT"/>
    <property type="molecule type" value="Genomic_DNA"/>
</dbReference>
<dbReference type="PIR" id="C86080">
    <property type="entry name" value="C86080"/>
</dbReference>
<dbReference type="PIR" id="C91233">
    <property type="entry name" value="C91233"/>
</dbReference>
<dbReference type="RefSeq" id="NP_312862.2">
    <property type="nucleotide sequence ID" value="NC_002695.1"/>
</dbReference>
<dbReference type="RefSeq" id="WP_001166037.1">
    <property type="nucleotide sequence ID" value="NZ_VOAI01000016.1"/>
</dbReference>
<dbReference type="STRING" id="155864.Z5454"/>
<dbReference type="GeneID" id="914956"/>
<dbReference type="KEGG" id="ece:Z5454"/>
<dbReference type="KEGG" id="ecs:ECs_4835"/>
<dbReference type="PATRIC" id="fig|386585.9.peg.5056"/>
<dbReference type="eggNOG" id="ENOG502Z7JT">
    <property type="taxonomic scope" value="Bacteria"/>
</dbReference>
<dbReference type="HOGENOM" id="CLU_057476_0_1_6"/>
<dbReference type="OMA" id="TPLATVW"/>
<dbReference type="Proteomes" id="UP000000558">
    <property type="component" value="Chromosome"/>
</dbReference>
<dbReference type="Proteomes" id="UP000002519">
    <property type="component" value="Chromosome"/>
</dbReference>
<dbReference type="GO" id="GO:0005886">
    <property type="term" value="C:plasma membrane"/>
    <property type="evidence" value="ECO:0007669"/>
    <property type="project" value="UniProtKB-SubCell"/>
</dbReference>
<dbReference type="GO" id="GO:0015649">
    <property type="term" value="F:2-keto-3-deoxygluconate:proton symporter activity"/>
    <property type="evidence" value="ECO:0007669"/>
    <property type="project" value="UniProtKB-UniRule"/>
</dbReference>
<dbReference type="HAMAP" id="MF_00070">
    <property type="entry name" value="KdgT"/>
    <property type="match status" value="1"/>
</dbReference>
<dbReference type="InterPro" id="IPR004684">
    <property type="entry name" value="2keto-3dGluconate_permease"/>
</dbReference>
<dbReference type="InterPro" id="IPR018395">
    <property type="entry name" value="2keto-3dGluconate_permease_sub"/>
</dbReference>
<dbReference type="NCBIfam" id="TIGR00793">
    <property type="entry name" value="kdgT"/>
    <property type="match status" value="1"/>
</dbReference>
<dbReference type="Pfam" id="PF03812">
    <property type="entry name" value="KdgT"/>
    <property type="match status" value="1"/>
</dbReference>